<dbReference type="EC" id="2.7.7.6" evidence="1"/>
<dbReference type="EMBL" id="CP000919">
    <property type="protein sequence ID" value="ACO19240.1"/>
    <property type="molecule type" value="Genomic_DNA"/>
</dbReference>
<dbReference type="RefSeq" id="WP_000228766.1">
    <property type="nucleotide sequence ID" value="NC_012466.1"/>
</dbReference>
<dbReference type="SMR" id="C1CGP3"/>
<dbReference type="KEGG" id="sjj:SPJ_1953"/>
<dbReference type="HOGENOM" id="CLU_000524_3_1_9"/>
<dbReference type="Proteomes" id="UP000002206">
    <property type="component" value="Chromosome"/>
</dbReference>
<dbReference type="GO" id="GO:0000428">
    <property type="term" value="C:DNA-directed RNA polymerase complex"/>
    <property type="evidence" value="ECO:0007669"/>
    <property type="project" value="UniProtKB-KW"/>
</dbReference>
<dbReference type="GO" id="GO:0003677">
    <property type="term" value="F:DNA binding"/>
    <property type="evidence" value="ECO:0007669"/>
    <property type="project" value="UniProtKB-UniRule"/>
</dbReference>
<dbReference type="GO" id="GO:0003899">
    <property type="term" value="F:DNA-directed RNA polymerase activity"/>
    <property type="evidence" value="ECO:0007669"/>
    <property type="project" value="UniProtKB-UniRule"/>
</dbReference>
<dbReference type="GO" id="GO:0000287">
    <property type="term" value="F:magnesium ion binding"/>
    <property type="evidence" value="ECO:0007669"/>
    <property type="project" value="UniProtKB-UniRule"/>
</dbReference>
<dbReference type="GO" id="GO:0008270">
    <property type="term" value="F:zinc ion binding"/>
    <property type="evidence" value="ECO:0007669"/>
    <property type="project" value="UniProtKB-UniRule"/>
</dbReference>
<dbReference type="GO" id="GO:0006351">
    <property type="term" value="P:DNA-templated transcription"/>
    <property type="evidence" value="ECO:0007669"/>
    <property type="project" value="UniProtKB-UniRule"/>
</dbReference>
<dbReference type="CDD" id="cd02655">
    <property type="entry name" value="RNAP_beta'_C"/>
    <property type="match status" value="1"/>
</dbReference>
<dbReference type="CDD" id="cd01609">
    <property type="entry name" value="RNAP_beta'_N"/>
    <property type="match status" value="1"/>
</dbReference>
<dbReference type="FunFam" id="1.10.150.390:FF:000002">
    <property type="entry name" value="DNA-directed RNA polymerase subunit beta"/>
    <property type="match status" value="1"/>
</dbReference>
<dbReference type="FunFam" id="4.10.860.120:FF:000001">
    <property type="entry name" value="DNA-directed RNA polymerase subunit beta"/>
    <property type="match status" value="1"/>
</dbReference>
<dbReference type="Gene3D" id="1.10.132.30">
    <property type="match status" value="1"/>
</dbReference>
<dbReference type="Gene3D" id="1.10.150.390">
    <property type="match status" value="1"/>
</dbReference>
<dbReference type="Gene3D" id="1.10.1790.20">
    <property type="match status" value="1"/>
</dbReference>
<dbReference type="Gene3D" id="1.10.40.90">
    <property type="match status" value="1"/>
</dbReference>
<dbReference type="Gene3D" id="2.40.40.20">
    <property type="match status" value="1"/>
</dbReference>
<dbReference type="Gene3D" id="2.40.50.100">
    <property type="match status" value="1"/>
</dbReference>
<dbReference type="Gene3D" id="4.10.860.120">
    <property type="entry name" value="RNA polymerase II, clamp domain"/>
    <property type="match status" value="1"/>
</dbReference>
<dbReference type="Gene3D" id="1.10.274.100">
    <property type="entry name" value="RNA polymerase Rpb1, domain 3"/>
    <property type="match status" value="1"/>
</dbReference>
<dbReference type="HAMAP" id="MF_01322">
    <property type="entry name" value="RNApol_bact_RpoC"/>
    <property type="match status" value="1"/>
</dbReference>
<dbReference type="InterPro" id="IPR045867">
    <property type="entry name" value="DNA-dir_RpoC_beta_prime"/>
</dbReference>
<dbReference type="InterPro" id="IPR012754">
    <property type="entry name" value="DNA-dir_RpoC_beta_prime_bact"/>
</dbReference>
<dbReference type="InterPro" id="IPR000722">
    <property type="entry name" value="RNA_pol_asu"/>
</dbReference>
<dbReference type="InterPro" id="IPR006592">
    <property type="entry name" value="RNA_pol_N"/>
</dbReference>
<dbReference type="InterPro" id="IPR007080">
    <property type="entry name" value="RNA_pol_Rpb1_1"/>
</dbReference>
<dbReference type="InterPro" id="IPR007066">
    <property type="entry name" value="RNA_pol_Rpb1_3"/>
</dbReference>
<dbReference type="InterPro" id="IPR042102">
    <property type="entry name" value="RNA_pol_Rpb1_3_sf"/>
</dbReference>
<dbReference type="InterPro" id="IPR007083">
    <property type="entry name" value="RNA_pol_Rpb1_4"/>
</dbReference>
<dbReference type="InterPro" id="IPR007081">
    <property type="entry name" value="RNA_pol_Rpb1_5"/>
</dbReference>
<dbReference type="InterPro" id="IPR044893">
    <property type="entry name" value="RNA_pol_Rpb1_clamp_domain"/>
</dbReference>
<dbReference type="InterPro" id="IPR038120">
    <property type="entry name" value="Rpb1_funnel_sf"/>
</dbReference>
<dbReference type="NCBIfam" id="TIGR02386">
    <property type="entry name" value="rpoC_TIGR"/>
    <property type="match status" value="1"/>
</dbReference>
<dbReference type="PANTHER" id="PTHR19376">
    <property type="entry name" value="DNA-DIRECTED RNA POLYMERASE"/>
    <property type="match status" value="1"/>
</dbReference>
<dbReference type="PANTHER" id="PTHR19376:SF54">
    <property type="entry name" value="DNA-DIRECTED RNA POLYMERASE SUBUNIT BETA"/>
    <property type="match status" value="1"/>
</dbReference>
<dbReference type="Pfam" id="PF04997">
    <property type="entry name" value="RNA_pol_Rpb1_1"/>
    <property type="match status" value="1"/>
</dbReference>
<dbReference type="Pfam" id="PF00623">
    <property type="entry name" value="RNA_pol_Rpb1_2"/>
    <property type="match status" value="2"/>
</dbReference>
<dbReference type="Pfam" id="PF04983">
    <property type="entry name" value="RNA_pol_Rpb1_3"/>
    <property type="match status" value="1"/>
</dbReference>
<dbReference type="Pfam" id="PF05000">
    <property type="entry name" value="RNA_pol_Rpb1_4"/>
    <property type="match status" value="1"/>
</dbReference>
<dbReference type="Pfam" id="PF04998">
    <property type="entry name" value="RNA_pol_Rpb1_5"/>
    <property type="match status" value="1"/>
</dbReference>
<dbReference type="SMART" id="SM00663">
    <property type="entry name" value="RPOLA_N"/>
    <property type="match status" value="1"/>
</dbReference>
<dbReference type="SUPFAM" id="SSF64484">
    <property type="entry name" value="beta and beta-prime subunits of DNA dependent RNA-polymerase"/>
    <property type="match status" value="1"/>
</dbReference>
<evidence type="ECO:0000255" key="1">
    <source>
        <dbReference type="HAMAP-Rule" id="MF_01322"/>
    </source>
</evidence>
<name>RPOC_STRZJ</name>
<keyword id="KW-0240">DNA-directed RNA polymerase</keyword>
<keyword id="KW-0460">Magnesium</keyword>
<keyword id="KW-0479">Metal-binding</keyword>
<keyword id="KW-0548">Nucleotidyltransferase</keyword>
<keyword id="KW-0804">Transcription</keyword>
<keyword id="KW-0808">Transferase</keyword>
<keyword id="KW-0862">Zinc</keyword>
<protein>
    <recommendedName>
        <fullName evidence="1">DNA-directed RNA polymerase subunit beta'</fullName>
        <shortName evidence="1">RNAP subunit beta'</shortName>
        <ecNumber evidence="1">2.7.7.6</ecNumber>
    </recommendedName>
    <alternativeName>
        <fullName evidence="1">RNA polymerase subunit beta'</fullName>
    </alternativeName>
    <alternativeName>
        <fullName evidence="1">Transcriptase subunit beta'</fullName>
    </alternativeName>
</protein>
<proteinExistence type="inferred from homology"/>
<reference key="1">
    <citation type="journal article" date="2010" name="Genome Biol.">
        <title>Structure and dynamics of the pan-genome of Streptococcus pneumoniae and closely related species.</title>
        <authorList>
            <person name="Donati C."/>
            <person name="Hiller N.L."/>
            <person name="Tettelin H."/>
            <person name="Muzzi A."/>
            <person name="Croucher N.J."/>
            <person name="Angiuoli S.V."/>
            <person name="Oggioni M."/>
            <person name="Dunning Hotopp J.C."/>
            <person name="Hu F.Z."/>
            <person name="Riley D.R."/>
            <person name="Covacci A."/>
            <person name="Mitchell T.J."/>
            <person name="Bentley S.D."/>
            <person name="Kilian M."/>
            <person name="Ehrlich G.D."/>
            <person name="Rappuoli R."/>
            <person name="Moxon E.R."/>
            <person name="Masignani V."/>
        </authorList>
    </citation>
    <scope>NUCLEOTIDE SEQUENCE [LARGE SCALE GENOMIC DNA]</scope>
    <source>
        <strain>JJA</strain>
    </source>
</reference>
<comment type="function">
    <text evidence="1">DNA-dependent RNA polymerase catalyzes the transcription of DNA into RNA using the four ribonucleoside triphosphates as substrates.</text>
</comment>
<comment type="catalytic activity">
    <reaction evidence="1">
        <text>RNA(n) + a ribonucleoside 5'-triphosphate = RNA(n+1) + diphosphate</text>
        <dbReference type="Rhea" id="RHEA:21248"/>
        <dbReference type="Rhea" id="RHEA-COMP:14527"/>
        <dbReference type="Rhea" id="RHEA-COMP:17342"/>
        <dbReference type="ChEBI" id="CHEBI:33019"/>
        <dbReference type="ChEBI" id="CHEBI:61557"/>
        <dbReference type="ChEBI" id="CHEBI:140395"/>
        <dbReference type="EC" id="2.7.7.6"/>
    </reaction>
</comment>
<comment type="cofactor">
    <cofactor evidence="1">
        <name>Mg(2+)</name>
        <dbReference type="ChEBI" id="CHEBI:18420"/>
    </cofactor>
    <text evidence="1">Binds 1 Mg(2+) ion per subunit.</text>
</comment>
<comment type="cofactor">
    <cofactor evidence="1">
        <name>Zn(2+)</name>
        <dbReference type="ChEBI" id="CHEBI:29105"/>
    </cofactor>
    <text evidence="1">Binds 2 Zn(2+) ions per subunit.</text>
</comment>
<comment type="subunit">
    <text evidence="1">The RNAP catalytic core consists of 2 alpha, 1 beta, 1 beta' and 1 omega subunit. When a sigma factor is associated with the core the holoenzyme is formed, which can initiate transcription.</text>
</comment>
<comment type="similarity">
    <text evidence="1">Belongs to the RNA polymerase beta' chain family.</text>
</comment>
<sequence>MVDVNRFKSMQITLASPSKVRSWSYGEVKKPETINYRTLKPEREGLFDEVIFGPTKDWECACGKYKRIRYRGIVCDRCGVEVTRTKVRRERMGHIELKAPVSHIWYFKGIPSRMGLTLDMSPRALEEVIYFAAYVVIDPKDTPLEHKSIMTEREYRERLREYGYGSFVAKMGAEAIQDLLKQVDLEKEIAELKEELKTATGQKRVKAIRRLDVLDAFYKSGNKPEWMILNILPVIPPDLRPMLQLDGGRFASSDLNDLYRRVINRNNRLARLLELNAPGIIVQNEKRMLQEAVDALIDNGRRGRPITGPGSRPLKSLSHMLKGKQGRFRQNLLGKRVDFSGRSVIAVGPTLKMYQCGVPREMAIELFKPFVMREIVARDIVQNVKAAKRLVERGDERIWDILEEVIKEHPVLLNRAPTLHRLGIQAFEPVLIDGKALRLHPLVCEAYNADFDGDQMAIHVPLSEEAQAEARILMLAAEHILNPKDGKPVVTPSQDMVLGNYYLTMEEAGREGEGMVFKDRDEAVMAYRNGYVHLHSRVGIATDSLNKPWTEEQRHKVLLTTVGKILFNDIMPEGLPYLQEPNNANLTEGVPAKYFLPLGGDIKEAISNLELNPPFKKKNLGNIIAEIFKRFRTTETSALLDRMKNLGYHHSTLAGLTVGIADIPVVDDKAEIIEESHKRVEQITKQFRRGMITDDERYNAVTAEWRAAREKLEKRLIANQDPKNPIVMMMDSGARGNISNFSQLAGMRGLMAAPNGRIMELPILSNFREGLSVLEMFFSTHGARKGMTDTALKTADSGYLTRRLVDVAQDVIIREDDCGTDRGLLIRSIAEGKEMIESLEERLNGRYTKKTVKHPETGAVIIGPNELITEDKAREIVNAGVEEVTIRSVFTCNTRHGVCRHCYGINLATGDAVEVGEAVGTIAAQSIGEPGTQLTMRTFHTGGVASNTDITQGLPRVQEIFEARNPKGEAVITEVKGQVTAIEEDASTRTKKVFVKGETGEGEYVVPFTARMRVEVGGQVARGAALTEGSIQPKRLLAVRDVLSVETYLLGEVQKVYRSQGVEIGDKHIEVMVRQMIRKVRVMDPGDTDLLMGTLMDINDFTDANKDVLIAGGVPATGRPVLMGITKASLETNSFLSAASFQETTRVLTDAAIRGKKDHLLGLKENVIIGKIIPAGTGMARYRNLEPHAVNEEEYLNPPVEEEGNEETTEVVVDTAVETVEETVE</sequence>
<organism>
    <name type="scientific">Streptococcus pneumoniae (strain JJA)</name>
    <dbReference type="NCBI Taxonomy" id="488222"/>
    <lineage>
        <taxon>Bacteria</taxon>
        <taxon>Bacillati</taxon>
        <taxon>Bacillota</taxon>
        <taxon>Bacilli</taxon>
        <taxon>Lactobacillales</taxon>
        <taxon>Streptococcaceae</taxon>
        <taxon>Streptococcus</taxon>
    </lineage>
</organism>
<feature type="chain" id="PRO_1000165853" description="DNA-directed RNA polymerase subunit beta'">
    <location>
        <begin position="1"/>
        <end position="1225"/>
    </location>
</feature>
<feature type="binding site" evidence="1">
    <location>
        <position position="60"/>
    </location>
    <ligand>
        <name>Zn(2+)</name>
        <dbReference type="ChEBI" id="CHEBI:29105"/>
        <label>1</label>
    </ligand>
</feature>
<feature type="binding site" evidence="1">
    <location>
        <position position="62"/>
    </location>
    <ligand>
        <name>Zn(2+)</name>
        <dbReference type="ChEBI" id="CHEBI:29105"/>
        <label>1</label>
    </ligand>
</feature>
<feature type="binding site" evidence="1">
    <location>
        <position position="75"/>
    </location>
    <ligand>
        <name>Zn(2+)</name>
        <dbReference type="ChEBI" id="CHEBI:29105"/>
        <label>1</label>
    </ligand>
</feature>
<feature type="binding site" evidence="1">
    <location>
        <position position="78"/>
    </location>
    <ligand>
        <name>Zn(2+)</name>
        <dbReference type="ChEBI" id="CHEBI:29105"/>
        <label>1</label>
    </ligand>
</feature>
<feature type="binding site" evidence="1">
    <location>
        <position position="450"/>
    </location>
    <ligand>
        <name>Mg(2+)</name>
        <dbReference type="ChEBI" id="CHEBI:18420"/>
    </ligand>
</feature>
<feature type="binding site" evidence="1">
    <location>
        <position position="452"/>
    </location>
    <ligand>
        <name>Mg(2+)</name>
        <dbReference type="ChEBI" id="CHEBI:18420"/>
    </ligand>
</feature>
<feature type="binding site" evidence="1">
    <location>
        <position position="454"/>
    </location>
    <ligand>
        <name>Mg(2+)</name>
        <dbReference type="ChEBI" id="CHEBI:18420"/>
    </ligand>
</feature>
<feature type="binding site" evidence="1">
    <location>
        <position position="818"/>
    </location>
    <ligand>
        <name>Zn(2+)</name>
        <dbReference type="ChEBI" id="CHEBI:29105"/>
        <label>2</label>
    </ligand>
</feature>
<feature type="binding site" evidence="1">
    <location>
        <position position="892"/>
    </location>
    <ligand>
        <name>Zn(2+)</name>
        <dbReference type="ChEBI" id="CHEBI:29105"/>
        <label>2</label>
    </ligand>
</feature>
<feature type="binding site" evidence="1">
    <location>
        <position position="899"/>
    </location>
    <ligand>
        <name>Zn(2+)</name>
        <dbReference type="ChEBI" id="CHEBI:29105"/>
        <label>2</label>
    </ligand>
</feature>
<feature type="binding site" evidence="1">
    <location>
        <position position="902"/>
    </location>
    <ligand>
        <name>Zn(2+)</name>
        <dbReference type="ChEBI" id="CHEBI:29105"/>
        <label>2</label>
    </ligand>
</feature>
<gene>
    <name evidence="1" type="primary">rpoC</name>
    <name type="ordered locus">SPJ_1953</name>
</gene>
<accession>C1CGP3</accession>